<sequence length="1384" mass="158405">MSSLVERLRIRSDRKPVYNLDDSDDDDFVPKKDRTFEQVEAIVRTDAKENACQACGESTNLVSCNTCTYAFHAKCLVPPLKDASVENWRCPECVSPLNEIDKILDCEMRPTKSSEQGSSDAEPKPIFVKQYLVKWKGLSYLHCSWVPEKEFQKAYKSNHRLKTRVNNFHRQMESFNNSEDDFVAIRPEWTTVDRILACREEDGELEYLVKYKELSYDECYWESESDISTFQNEIQRFKDVNSRTRRSKDVDHKRNPRDFQQFDHTPEFLKGLLHPYQLEGLNFLRFSWSKQTHVILADEMGLGKTIQSIALLASLFEENLIPHLVIAPLSTLRNWEREFATWAPQMNVVMYFGTAQARAVIREHEFYLSKDQKKIKKKKSGQISSESKQKRIKFDVLLTSYEMINLDSAVLKPIKWECMIVDEGHRLKNKDSKLFSSLTQYSSNHRILLTGTPLQNNLDELFMLMHFLDAGKFGSLEEFQEEFKDINQEEQISRLHKMLAPHLLRRVKKDVMKDMPPKKELILRVDLSSLQKEYYKAIFTRNYQVLTKKGGAQISLNNIMMELRKVCCHPYMLEGVEPVIHDANEAFKQLLESCGKLQLLDKMMVKLKEQGHRVLIYTQFQHMLDLLEDYCTHKKWQYERIDGKVGGAERQIRIDRFNAKNSNKFCFLLSTRAGGLGINLATADTVIIYDSDWNPHADLQAMARAHRLGQTNKVMIYRLINRGTIEERMMQLTKKKMVLEHLVVGKLKTQNINQEELDDIIRYGSKELFASEDDEAGKSGKIHYDDAAIDKLLDRDLVEAEEVSVDDEEENGFLKAFKVANFEYIDENEAAALEAQRVAAESKSSAGNSDRASYWEELLKDKFELHQAEELNALGKRKRSRKQLVSIEEDDLAGLEDVSSDGDESYEAESTDGEAAGQGVQTGRRPYRRKGRDNLEPTPLMEGEGRSFRVLGFNQSQRAIFVQTLMRYGAGNFDWKEFVPRLKQKTFEEINEYGILFLKHIAEEIDENSPTFSDGVPKEGLRIEDVLVRIALLILVQEKVKFVEDHPGKPVFPSRILERFPGLRSGKIWKEEHDKIMIRAVLKHGYGRWQAIVDDKELGIQELICKELNFPHISLSAAEQAGLQGQNGSGGSNPGAQTNQNPGSVITGNNNASADGAQVNSMFYYRDMQRRLVEFVKKRVLLLEKAMNYEYAEEYYGLGGSSSIPTEEPEAEPKIADTVGVSFIEVDDEMLDGLPKTDPITSEEIMGAAVDNNQARVEIAQHYNQMCKLLDENARESVQAYVNNQPPSTKVNESFRALKSINGNINTILSITSDQSKSHEDDTKPDLNNVEMKDTAEETKPLRGGVVDLNVVEGEENIAEASGSVDVKMEEAKEEEKPKNMVVD</sequence>
<name>PKL_ARATH</name>
<feature type="chain" id="PRO_0000233174" description="CHD3-type chromatin-remodeling factor PICKLE">
    <location>
        <begin position="1"/>
        <end position="1384"/>
    </location>
</feature>
<feature type="domain" description="Chromo 1" evidence="1">
    <location>
        <begin position="98"/>
        <end position="180"/>
    </location>
</feature>
<feature type="domain" description="Chromo 2" evidence="1">
    <location>
        <begin position="190"/>
        <end position="249"/>
    </location>
</feature>
<feature type="domain" description="Helicase ATP-binding" evidence="3">
    <location>
        <begin position="285"/>
        <end position="471"/>
    </location>
</feature>
<feature type="domain" description="Helicase C-terminal" evidence="4">
    <location>
        <begin position="599"/>
        <end position="760"/>
    </location>
</feature>
<feature type="zinc finger region" description="PHD-type" evidence="2">
    <location>
        <begin position="49"/>
        <end position="96"/>
    </location>
</feature>
<feature type="region of interest" description="Disordered" evidence="6">
    <location>
        <begin position="893"/>
        <end position="941"/>
    </location>
</feature>
<feature type="region of interest" description="Disordered" evidence="6">
    <location>
        <begin position="1122"/>
        <end position="1152"/>
    </location>
</feature>
<feature type="region of interest" description="Disordered" evidence="6">
    <location>
        <begin position="1313"/>
        <end position="1344"/>
    </location>
</feature>
<feature type="region of interest" description="Disordered" evidence="6">
    <location>
        <begin position="1365"/>
        <end position="1384"/>
    </location>
</feature>
<feature type="short sequence motif" description="Nuclear localization signal" evidence="5">
    <location>
        <begin position="376"/>
        <end position="383"/>
    </location>
</feature>
<feature type="short sequence motif" description="DEAH box" evidence="3">
    <location>
        <begin position="422"/>
        <end position="425"/>
    </location>
</feature>
<feature type="compositionally biased region" description="Acidic residues" evidence="6">
    <location>
        <begin position="893"/>
        <end position="912"/>
    </location>
</feature>
<feature type="compositionally biased region" description="Polar residues" evidence="6">
    <location>
        <begin position="1138"/>
        <end position="1152"/>
    </location>
</feature>
<feature type="compositionally biased region" description="Basic and acidic residues" evidence="6">
    <location>
        <begin position="1316"/>
        <end position="1341"/>
    </location>
</feature>
<feature type="compositionally biased region" description="Basic and acidic residues" evidence="6">
    <location>
        <begin position="1367"/>
        <end position="1384"/>
    </location>
</feature>
<feature type="binding site" evidence="3">
    <location>
        <begin position="298"/>
        <end position="305"/>
    </location>
    <ligand>
        <name>ATP</name>
        <dbReference type="ChEBI" id="CHEBI:30616"/>
    </ligand>
</feature>
<feature type="modified residue" description="Phosphoserine" evidence="14 15">
    <location>
        <position position="23"/>
    </location>
</feature>
<feature type="mutagenesis site" description="In chk2-2; hypersensitivity to cytokinins." evidence="11">
    <original>G</original>
    <variation>R</variation>
    <location>
        <position position="301"/>
    </location>
</feature>
<feature type="mutagenesis site" description="In gym-4; when associated with a lack of CRC, morphological aberrations including shorter and narrower carpels containing external ovules." evidence="7">
    <original>G</original>
    <variation>E</variation>
    <location>
        <position position="451"/>
    </location>
</feature>
<feature type="mutagenesis site" description="In pkl-1; embryonic traits expressed after germination including pickle roots (primary roots of adult plants that express embryonic differentiation traits such as expression of storage protein genes and accumulation of storage lipids)." evidence="9">
    <location>
        <begin position="633"/>
        <end position="635"/>
    </location>
</feature>
<feature type="sequence conflict" description="In Ref. 5; BAF01271." evidence="13" ref="5">
    <original>M</original>
    <variation>L</variation>
    <location>
        <position position="419"/>
    </location>
</feature>
<feature type="sequence conflict" description="In Ref. 5; BAF01271." evidence="13" ref="5">
    <original>K</original>
    <variation>R</variation>
    <location>
        <position position="565"/>
    </location>
</feature>
<organism>
    <name type="scientific">Arabidopsis thaliana</name>
    <name type="common">Mouse-ear cress</name>
    <dbReference type="NCBI Taxonomy" id="3702"/>
    <lineage>
        <taxon>Eukaryota</taxon>
        <taxon>Viridiplantae</taxon>
        <taxon>Streptophyta</taxon>
        <taxon>Embryophyta</taxon>
        <taxon>Tracheophyta</taxon>
        <taxon>Spermatophyta</taxon>
        <taxon>Magnoliopsida</taxon>
        <taxon>eudicotyledons</taxon>
        <taxon>Gunneridae</taxon>
        <taxon>Pentapetalae</taxon>
        <taxon>rosids</taxon>
        <taxon>malvids</taxon>
        <taxon>Brassicales</taxon>
        <taxon>Brassicaceae</taxon>
        <taxon>Camelineae</taxon>
        <taxon>Arabidopsis</taxon>
    </lineage>
</organism>
<reference key="1">
    <citation type="journal article" date="1999" name="Cell">
        <title>Distinct mechanisms promote polarity establishment in carpels of Arabidopsis.</title>
        <authorList>
            <person name="Eshed Y."/>
            <person name="Baum S.F."/>
            <person name="Bowman J.L."/>
        </authorList>
    </citation>
    <scope>NUCLEOTIDE SEQUENCE [MRNA]</scope>
    <scope>FUNCTION</scope>
    <scope>TISSUE SPECIFICITY</scope>
    <scope>MUTAGENESIS OF GLY-451</scope>
    <source>
        <strain>cv. Columbia</strain>
    </source>
</reference>
<reference key="2">
    <citation type="journal article" date="1999" name="Proc. Natl. Acad. Sci. U.S.A.">
        <title>PICKLE is a CHD3 chromatin-remodeling factor that regulates the transition from embryonic to vegetative development in Arabidopsis.</title>
        <authorList>
            <person name="Ogas J."/>
            <person name="Kaufmann S."/>
            <person name="Henderson J."/>
            <person name="Somerville C."/>
        </authorList>
    </citation>
    <scope>NUCLEOTIDE SEQUENCE [MRNA]</scope>
    <scope>FUNCTION</scope>
    <scope>TISSUE SPECIFICITY</scope>
    <source>
        <strain>cv. Columbia</strain>
    </source>
</reference>
<reference key="3">
    <citation type="journal article" date="1999" name="Nature">
        <title>Sequence and analysis of chromosome 2 of the plant Arabidopsis thaliana.</title>
        <authorList>
            <person name="Lin X."/>
            <person name="Kaul S."/>
            <person name="Rounsley S.D."/>
            <person name="Shea T.P."/>
            <person name="Benito M.-I."/>
            <person name="Town C.D."/>
            <person name="Fujii C.Y."/>
            <person name="Mason T.M."/>
            <person name="Bowman C.L."/>
            <person name="Barnstead M.E."/>
            <person name="Feldblyum T.V."/>
            <person name="Buell C.R."/>
            <person name="Ketchum K.A."/>
            <person name="Lee J.J."/>
            <person name="Ronning C.M."/>
            <person name="Koo H.L."/>
            <person name="Moffat K.S."/>
            <person name="Cronin L.A."/>
            <person name="Shen M."/>
            <person name="Pai G."/>
            <person name="Van Aken S."/>
            <person name="Umayam L."/>
            <person name="Tallon L.J."/>
            <person name="Gill J.E."/>
            <person name="Adams M.D."/>
            <person name="Carrera A.J."/>
            <person name="Creasy T.H."/>
            <person name="Goodman H.M."/>
            <person name="Somerville C.R."/>
            <person name="Copenhaver G.P."/>
            <person name="Preuss D."/>
            <person name="Nierman W.C."/>
            <person name="White O."/>
            <person name="Eisen J.A."/>
            <person name="Salzberg S.L."/>
            <person name="Fraser C.M."/>
            <person name="Venter J.C."/>
        </authorList>
    </citation>
    <scope>NUCLEOTIDE SEQUENCE [LARGE SCALE GENOMIC DNA]</scope>
    <source>
        <strain>cv. Columbia</strain>
    </source>
</reference>
<reference key="4">
    <citation type="journal article" date="2017" name="Plant J.">
        <title>Araport11: a complete reannotation of the Arabidopsis thaliana reference genome.</title>
        <authorList>
            <person name="Cheng C.Y."/>
            <person name="Krishnakumar V."/>
            <person name="Chan A.P."/>
            <person name="Thibaud-Nissen F."/>
            <person name="Schobel S."/>
            <person name="Town C.D."/>
        </authorList>
    </citation>
    <scope>GENOME REANNOTATION</scope>
    <source>
        <strain>cv. Columbia</strain>
    </source>
</reference>
<reference key="5">
    <citation type="submission" date="2006-07" db="EMBL/GenBank/DDBJ databases">
        <title>Large-scale analysis of RIKEN Arabidopsis full-length (RAFL) cDNAs.</title>
        <authorList>
            <person name="Totoki Y."/>
            <person name="Seki M."/>
            <person name="Ishida J."/>
            <person name="Nakajima M."/>
            <person name="Enju A."/>
            <person name="Kamiya A."/>
            <person name="Narusaka M."/>
            <person name="Shin-i T."/>
            <person name="Nakagawa M."/>
            <person name="Sakamoto N."/>
            <person name="Oishi K."/>
            <person name="Kohara Y."/>
            <person name="Kobayashi M."/>
            <person name="Toyoda A."/>
            <person name="Sakaki Y."/>
            <person name="Sakurai T."/>
            <person name="Iida K."/>
            <person name="Akiyama K."/>
            <person name="Satou M."/>
            <person name="Toyoda T."/>
            <person name="Konagaya A."/>
            <person name="Carninci P."/>
            <person name="Kawai J."/>
            <person name="Hayashizaki Y."/>
            <person name="Shinozaki K."/>
        </authorList>
    </citation>
    <scope>NUCLEOTIDE SEQUENCE [LARGE SCALE MRNA] OF 419-1384</scope>
    <source>
        <strain>cv. Columbia</strain>
    </source>
</reference>
<reference key="6">
    <citation type="journal article" date="2005" name="Plant J.">
        <title>PICKLE acts during germination to repress expression of embryonic traits.</title>
        <authorList>
            <person name="Li H.-C."/>
            <person name="Chuang K."/>
            <person name="Henderson J.T."/>
            <person name="Rider S.D. Jr."/>
            <person name="Bai Y."/>
            <person name="Zhang H."/>
            <person name="Fountain M."/>
            <person name="Gerber J."/>
            <person name="Ogas J."/>
        </authorList>
    </citation>
    <scope>FUNCTION</scope>
    <scope>TISSUE SPECIFICITY</scope>
    <scope>SUBCELLULAR LOCATION</scope>
    <scope>MUTAGENESIS OF 633-HIS--LYS-635</scope>
</reference>
<reference key="7">
    <citation type="journal article" date="2006" name="Genetics">
        <title>Involvement of the Arabidopsis SWI2/SNF2 chromatin remodeling gene family in DNA damage response and recombination.</title>
        <authorList>
            <person name="Shaked H."/>
            <person name="Avivi-Ragolsky N."/>
            <person name="Levy A.A."/>
        </authorList>
    </citation>
    <scope>GENE FAMILY</scope>
    <scope>NOMENCLATURE</scope>
</reference>
<reference key="8">
    <citation type="journal article" date="2009" name="J. Proteomics">
        <title>Phosphoproteomic analysis of nuclei-enriched fractions from Arabidopsis thaliana.</title>
        <authorList>
            <person name="Jones A.M.E."/>
            <person name="MacLean D."/>
            <person name="Studholme D.J."/>
            <person name="Serna-Sanz A."/>
            <person name="Andreasson E."/>
            <person name="Rathjen J.P."/>
            <person name="Peck S.C."/>
        </authorList>
    </citation>
    <scope>SUBCELLULAR LOCATION</scope>
    <scope>PHOSPHORYLATION [LARGE SCALE ANALYSIS] AT SER-23</scope>
    <scope>IDENTIFICATION BY MASS SPECTROMETRY [LARGE SCALE ANALYSIS]</scope>
    <source>
        <strain>cv. Columbia</strain>
    </source>
</reference>
<reference key="9">
    <citation type="journal article" date="2009" name="Plant Physiol.">
        <title>Large-scale Arabidopsis phosphoproteome profiling reveals novel chloroplast kinase substrates and phosphorylation networks.</title>
        <authorList>
            <person name="Reiland S."/>
            <person name="Messerli G."/>
            <person name="Baerenfaller K."/>
            <person name="Gerrits B."/>
            <person name="Endler A."/>
            <person name="Grossmann J."/>
            <person name="Gruissem W."/>
            <person name="Baginsky S."/>
        </authorList>
    </citation>
    <scope>PHOSPHORYLATION [LARGE SCALE ANALYSIS] AT SER-23</scope>
    <scope>IDENTIFICATION BY MASS SPECTROMETRY [LARGE SCALE ANALYSIS]</scope>
</reference>
<reference key="10">
    <citation type="journal article" date="2011" name="Plant Cell Physiol.">
        <title>The CKH2/PKL chromatin remodeling factor negatively regulates cytokinin responses in Arabidopsis calli.</title>
        <authorList>
            <person name="Furuta K."/>
            <person name="Kubo M."/>
            <person name="Sano K."/>
            <person name="Demura T."/>
            <person name="Fukuda H."/>
            <person name="Liu Y.G."/>
            <person name="Shibata D."/>
            <person name="Kakimoto T."/>
        </authorList>
    </citation>
    <scope>FUNCTION</scope>
    <scope>MUTAGENESIS OF GLY-301</scope>
    <scope>INTERACTION WITH TAF12B</scope>
    <scope>DISRUPTION PHENOTYPE</scope>
    <scope>INDUCTION BY CYTOKININS</scope>
    <source>
        <strain>cv. Landsberg erecta</strain>
    </source>
</reference>
<reference key="11">
    <citation type="journal article" date="2013" name="PLoS ONE">
        <title>Genome-wide comparative in silico analysis of the RNA helicase gene family in Zea mays and Glycine max: a comparison with Arabidopsis and Oryza sativa.</title>
        <authorList>
            <person name="Xu R."/>
            <person name="Zhang S."/>
            <person name="Huang J."/>
            <person name="Zheng C."/>
        </authorList>
    </citation>
    <scope>GENE FAMILY</scope>
</reference>
<gene>
    <name type="primary">PKL</name>
    <name evidence="12" type="synonym">CHR6</name>
    <name type="synonym">GYM</name>
    <name type="ordered locus">At2g25170</name>
    <name type="ORF">F13D4.130</name>
</gene>
<evidence type="ECO:0000255" key="1">
    <source>
        <dbReference type="PROSITE-ProRule" id="PRU00053"/>
    </source>
</evidence>
<evidence type="ECO:0000255" key="2">
    <source>
        <dbReference type="PROSITE-ProRule" id="PRU00146"/>
    </source>
</evidence>
<evidence type="ECO:0000255" key="3">
    <source>
        <dbReference type="PROSITE-ProRule" id="PRU00541"/>
    </source>
</evidence>
<evidence type="ECO:0000255" key="4">
    <source>
        <dbReference type="PROSITE-ProRule" id="PRU00542"/>
    </source>
</evidence>
<evidence type="ECO:0000255" key="5">
    <source>
        <dbReference type="PROSITE-ProRule" id="PRU00768"/>
    </source>
</evidence>
<evidence type="ECO:0000256" key="6">
    <source>
        <dbReference type="SAM" id="MobiDB-lite"/>
    </source>
</evidence>
<evidence type="ECO:0000269" key="7">
    <source>
    </source>
</evidence>
<evidence type="ECO:0000269" key="8">
    <source>
    </source>
</evidence>
<evidence type="ECO:0000269" key="9">
    <source>
    </source>
</evidence>
<evidence type="ECO:0000269" key="10">
    <source>
    </source>
</evidence>
<evidence type="ECO:0000269" key="11">
    <source>
    </source>
</evidence>
<evidence type="ECO:0000303" key="12">
    <source>
    </source>
</evidence>
<evidence type="ECO:0000305" key="13"/>
<evidence type="ECO:0007744" key="14">
    <source>
    </source>
</evidence>
<evidence type="ECO:0007744" key="15">
    <source>
    </source>
</evidence>
<keyword id="KW-0067">ATP-binding</keyword>
<keyword id="KW-0156">Chromatin regulator</keyword>
<keyword id="KW-0238">DNA-binding</keyword>
<keyword id="KW-0347">Helicase</keyword>
<keyword id="KW-0378">Hydrolase</keyword>
<keyword id="KW-0479">Metal-binding</keyword>
<keyword id="KW-0547">Nucleotide-binding</keyword>
<keyword id="KW-0539">Nucleus</keyword>
<keyword id="KW-0597">Phosphoprotein</keyword>
<keyword id="KW-1185">Reference proteome</keyword>
<keyword id="KW-0677">Repeat</keyword>
<keyword id="KW-0862">Zinc</keyword>
<keyword id="KW-0863">Zinc-finger</keyword>
<accession>Q9S775</accession>
<accession>Q0WNM8</accession>
<dbReference type="EC" id="3.6.4.-"/>
<dbReference type="EMBL" id="AF185578">
    <property type="protein sequence ID" value="AAF07084.1"/>
    <property type="molecule type" value="mRNA"/>
</dbReference>
<dbReference type="EMBL" id="AF185577">
    <property type="protein sequence ID" value="AAF13875.1"/>
    <property type="molecule type" value="mRNA"/>
</dbReference>
<dbReference type="EMBL" id="CP002685">
    <property type="protein sequence ID" value="AEC07666.1"/>
    <property type="molecule type" value="Genomic_DNA"/>
</dbReference>
<dbReference type="EMBL" id="CP002685">
    <property type="protein sequence ID" value="ANM62112.1"/>
    <property type="molecule type" value="Genomic_DNA"/>
</dbReference>
<dbReference type="EMBL" id="AK229409">
    <property type="protein sequence ID" value="BAF01271.1"/>
    <property type="molecule type" value="mRNA"/>
</dbReference>
<dbReference type="PIR" id="T52301">
    <property type="entry name" value="T52301"/>
</dbReference>
<dbReference type="RefSeq" id="NP_001324291.1">
    <property type="nucleotide sequence ID" value="NM_001335978.1"/>
</dbReference>
<dbReference type="RefSeq" id="NP_565587.1">
    <property type="nucleotide sequence ID" value="NM_128074.4"/>
</dbReference>
<dbReference type="SMR" id="Q9S775"/>
<dbReference type="BioGRID" id="2407">
    <property type="interactions" value="35"/>
</dbReference>
<dbReference type="FunCoup" id="Q9S775">
    <property type="interactions" value="3573"/>
</dbReference>
<dbReference type="STRING" id="3702.Q9S775"/>
<dbReference type="iPTMnet" id="Q9S775"/>
<dbReference type="PaxDb" id="3702-AT2G25170.1"/>
<dbReference type="ProteomicsDB" id="235032"/>
<dbReference type="EnsemblPlants" id="AT2G25170.1">
    <property type="protein sequence ID" value="AT2G25170.1"/>
    <property type="gene ID" value="AT2G25170"/>
</dbReference>
<dbReference type="EnsemblPlants" id="AT2G25170.4">
    <property type="protein sequence ID" value="AT2G25170.4"/>
    <property type="gene ID" value="AT2G25170"/>
</dbReference>
<dbReference type="GeneID" id="817055"/>
<dbReference type="Gramene" id="AT2G25170.1">
    <property type="protein sequence ID" value="AT2G25170.1"/>
    <property type="gene ID" value="AT2G25170"/>
</dbReference>
<dbReference type="Gramene" id="AT2G25170.4">
    <property type="protein sequence ID" value="AT2G25170.4"/>
    <property type="gene ID" value="AT2G25170"/>
</dbReference>
<dbReference type="KEGG" id="ath:AT2G25170"/>
<dbReference type="Araport" id="AT2G25170"/>
<dbReference type="TAIR" id="AT2G25170">
    <property type="gene designation" value="PKL"/>
</dbReference>
<dbReference type="eggNOG" id="KOG0383">
    <property type="taxonomic scope" value="Eukaryota"/>
</dbReference>
<dbReference type="HOGENOM" id="CLU_000315_31_0_1"/>
<dbReference type="InParanoid" id="Q9S775"/>
<dbReference type="OMA" id="YNEMCKL"/>
<dbReference type="PhylomeDB" id="Q9S775"/>
<dbReference type="CD-CODE" id="4299E36E">
    <property type="entry name" value="Nucleolus"/>
</dbReference>
<dbReference type="PRO" id="PR:Q9S775"/>
<dbReference type="Proteomes" id="UP000006548">
    <property type="component" value="Chromosome 2"/>
</dbReference>
<dbReference type="ExpressionAtlas" id="Q9S775">
    <property type="expression patterns" value="baseline and differential"/>
</dbReference>
<dbReference type="GO" id="GO:0005634">
    <property type="term" value="C:nucleus"/>
    <property type="evidence" value="ECO:0000314"/>
    <property type="project" value="TAIR"/>
</dbReference>
<dbReference type="GO" id="GO:0005524">
    <property type="term" value="F:ATP binding"/>
    <property type="evidence" value="ECO:0007669"/>
    <property type="project" value="UniProtKB-KW"/>
</dbReference>
<dbReference type="GO" id="GO:0003677">
    <property type="term" value="F:DNA binding"/>
    <property type="evidence" value="ECO:0000250"/>
    <property type="project" value="TAIR"/>
</dbReference>
<dbReference type="GO" id="GO:0004386">
    <property type="term" value="F:helicase activity"/>
    <property type="evidence" value="ECO:0007669"/>
    <property type="project" value="UniProtKB-KW"/>
</dbReference>
<dbReference type="GO" id="GO:0016787">
    <property type="term" value="F:hydrolase activity"/>
    <property type="evidence" value="ECO:0007669"/>
    <property type="project" value="UniProtKB-KW"/>
</dbReference>
<dbReference type="GO" id="GO:0008270">
    <property type="term" value="F:zinc ion binding"/>
    <property type="evidence" value="ECO:0007669"/>
    <property type="project" value="UniProtKB-KW"/>
</dbReference>
<dbReference type="GO" id="GO:0051301">
    <property type="term" value="P:cell division"/>
    <property type="evidence" value="ECO:0000315"/>
    <property type="project" value="TAIR"/>
</dbReference>
<dbReference type="GO" id="GO:0006338">
    <property type="term" value="P:chromatin remodeling"/>
    <property type="evidence" value="ECO:0000250"/>
    <property type="project" value="TAIR"/>
</dbReference>
<dbReference type="GO" id="GO:0009736">
    <property type="term" value="P:cytokinin-activated signaling pathway"/>
    <property type="evidence" value="ECO:0000315"/>
    <property type="project" value="TAIR"/>
</dbReference>
<dbReference type="GO" id="GO:0009992">
    <property type="term" value="P:intracellular water homeostasis"/>
    <property type="evidence" value="ECO:0000315"/>
    <property type="project" value="TAIR"/>
</dbReference>
<dbReference type="GO" id="GO:0009788">
    <property type="term" value="P:negative regulation of abscisic acid-activated signaling pathway"/>
    <property type="evidence" value="ECO:0000315"/>
    <property type="project" value="TAIR"/>
</dbReference>
<dbReference type="GO" id="GO:0045892">
    <property type="term" value="P:negative regulation of DNA-templated transcription"/>
    <property type="evidence" value="ECO:0000315"/>
    <property type="project" value="TAIR"/>
</dbReference>
<dbReference type="GO" id="GO:2000023">
    <property type="term" value="P:regulation of lateral root development"/>
    <property type="evidence" value="ECO:0000315"/>
    <property type="project" value="TAIR"/>
</dbReference>
<dbReference type="GO" id="GO:0009733">
    <property type="term" value="P:response to auxin"/>
    <property type="evidence" value="ECO:0000315"/>
    <property type="project" value="TAIR"/>
</dbReference>
<dbReference type="GO" id="GO:0009739">
    <property type="term" value="P:response to gibberellin"/>
    <property type="evidence" value="ECO:0000315"/>
    <property type="project" value="TAIR"/>
</dbReference>
<dbReference type="GO" id="GO:0009414">
    <property type="term" value="P:response to water deprivation"/>
    <property type="evidence" value="ECO:0000315"/>
    <property type="project" value="TAIR"/>
</dbReference>
<dbReference type="GO" id="GO:0048364">
    <property type="term" value="P:root development"/>
    <property type="evidence" value="ECO:0000315"/>
    <property type="project" value="TAIR"/>
</dbReference>
<dbReference type="CDD" id="cd18660">
    <property type="entry name" value="CD1_tandem"/>
    <property type="match status" value="1"/>
</dbReference>
<dbReference type="CDD" id="cd18659">
    <property type="entry name" value="CD2_tandem"/>
    <property type="match status" value="1"/>
</dbReference>
<dbReference type="CDD" id="cd18793">
    <property type="entry name" value="SF2_C_SNF"/>
    <property type="match status" value="1"/>
</dbReference>
<dbReference type="FunFam" id="2.40.50.40:FF:000069">
    <property type="entry name" value="Chromatin remodeling factor CHD3 (PICKLE)"/>
    <property type="match status" value="1"/>
</dbReference>
<dbReference type="Gene3D" id="2.40.50.40">
    <property type="match status" value="2"/>
</dbReference>
<dbReference type="Gene3D" id="1.10.10.60">
    <property type="entry name" value="Homeodomain-like"/>
    <property type="match status" value="1"/>
</dbReference>
<dbReference type="Gene3D" id="3.40.50.300">
    <property type="entry name" value="P-loop containing nucleotide triphosphate hydrolases"/>
    <property type="match status" value="1"/>
</dbReference>
<dbReference type="Gene3D" id="3.40.50.10810">
    <property type="entry name" value="Tandem AAA-ATPase domain"/>
    <property type="match status" value="1"/>
</dbReference>
<dbReference type="Gene3D" id="3.30.40.10">
    <property type="entry name" value="Zinc/RING finger domain, C3HC4 (zinc finger)"/>
    <property type="match status" value="1"/>
</dbReference>
<dbReference type="InterPro" id="IPR009462">
    <property type="entry name" value="CHD_II_SANT-like"/>
</dbReference>
<dbReference type="InterPro" id="IPR016197">
    <property type="entry name" value="Chromo-like_dom_sf"/>
</dbReference>
<dbReference type="InterPro" id="IPR000953">
    <property type="entry name" value="Chromo/chromo_shadow_dom"/>
</dbReference>
<dbReference type="InterPro" id="IPR023780">
    <property type="entry name" value="Chromo_domain"/>
</dbReference>
<dbReference type="InterPro" id="IPR009463">
    <property type="entry name" value="DUF1087"/>
</dbReference>
<dbReference type="InterPro" id="IPR014001">
    <property type="entry name" value="Helicase_ATP-bd"/>
</dbReference>
<dbReference type="InterPro" id="IPR001650">
    <property type="entry name" value="Helicase_C-like"/>
</dbReference>
<dbReference type="InterPro" id="IPR027417">
    <property type="entry name" value="P-loop_NTPase"/>
</dbReference>
<dbReference type="InterPro" id="IPR038718">
    <property type="entry name" value="SNF2-like_sf"/>
</dbReference>
<dbReference type="InterPro" id="IPR049730">
    <property type="entry name" value="SNF2/RAD54-like_C"/>
</dbReference>
<dbReference type="InterPro" id="IPR000330">
    <property type="entry name" value="SNF2_N"/>
</dbReference>
<dbReference type="InterPro" id="IPR019786">
    <property type="entry name" value="Zinc_finger_PHD-type_CS"/>
</dbReference>
<dbReference type="InterPro" id="IPR001965">
    <property type="entry name" value="Znf_PHD"/>
</dbReference>
<dbReference type="InterPro" id="IPR019787">
    <property type="entry name" value="Znf_PHD-finger"/>
</dbReference>
<dbReference type="InterPro" id="IPR013083">
    <property type="entry name" value="Znf_RING/FYVE/PHD"/>
</dbReference>
<dbReference type="PANTHER" id="PTHR45623:SF17">
    <property type="entry name" value="CHROMODOMAIN-HELICASE-DNA-BINDING PROTEIN 3-RELATED"/>
    <property type="match status" value="1"/>
</dbReference>
<dbReference type="PANTHER" id="PTHR45623">
    <property type="entry name" value="CHROMODOMAIN-HELICASE-DNA-BINDING PROTEIN 3-RELATED-RELATED"/>
    <property type="match status" value="1"/>
</dbReference>
<dbReference type="Pfam" id="PF06461">
    <property type="entry name" value="CHDII_SANT-like"/>
    <property type="match status" value="1"/>
</dbReference>
<dbReference type="Pfam" id="PF00385">
    <property type="entry name" value="Chromo"/>
    <property type="match status" value="2"/>
</dbReference>
<dbReference type="Pfam" id="PF06465">
    <property type="entry name" value="DUF1087"/>
    <property type="match status" value="1"/>
</dbReference>
<dbReference type="Pfam" id="PF00271">
    <property type="entry name" value="Helicase_C"/>
    <property type="match status" value="1"/>
</dbReference>
<dbReference type="Pfam" id="PF00628">
    <property type="entry name" value="PHD"/>
    <property type="match status" value="1"/>
</dbReference>
<dbReference type="Pfam" id="PF00176">
    <property type="entry name" value="SNF2-rel_dom"/>
    <property type="match status" value="1"/>
</dbReference>
<dbReference type="SMART" id="SM00298">
    <property type="entry name" value="CHROMO"/>
    <property type="match status" value="2"/>
</dbReference>
<dbReference type="SMART" id="SM00487">
    <property type="entry name" value="DEXDc"/>
    <property type="match status" value="1"/>
</dbReference>
<dbReference type="SMART" id="SM01146">
    <property type="entry name" value="DUF1086"/>
    <property type="match status" value="1"/>
</dbReference>
<dbReference type="SMART" id="SM01147">
    <property type="entry name" value="DUF1087"/>
    <property type="match status" value="1"/>
</dbReference>
<dbReference type="SMART" id="SM00490">
    <property type="entry name" value="HELICc"/>
    <property type="match status" value="1"/>
</dbReference>
<dbReference type="SMART" id="SM00249">
    <property type="entry name" value="PHD"/>
    <property type="match status" value="1"/>
</dbReference>
<dbReference type="SUPFAM" id="SSF54160">
    <property type="entry name" value="Chromo domain-like"/>
    <property type="match status" value="2"/>
</dbReference>
<dbReference type="SUPFAM" id="SSF52540">
    <property type="entry name" value="P-loop containing nucleoside triphosphate hydrolases"/>
    <property type="match status" value="2"/>
</dbReference>
<dbReference type="PROSITE" id="PS50013">
    <property type="entry name" value="CHROMO_2"/>
    <property type="match status" value="2"/>
</dbReference>
<dbReference type="PROSITE" id="PS51192">
    <property type="entry name" value="HELICASE_ATP_BIND_1"/>
    <property type="match status" value="1"/>
</dbReference>
<dbReference type="PROSITE" id="PS51194">
    <property type="entry name" value="HELICASE_CTER"/>
    <property type="match status" value="1"/>
</dbReference>
<dbReference type="PROSITE" id="PS01359">
    <property type="entry name" value="ZF_PHD_1"/>
    <property type="match status" value="1"/>
</dbReference>
<dbReference type="PROSITE" id="PS50016">
    <property type="entry name" value="ZF_PHD_2"/>
    <property type="match status" value="1"/>
</dbReference>
<proteinExistence type="evidence at protein level"/>
<protein>
    <recommendedName>
        <fullName>CHD3-type chromatin-remodeling factor PICKLE</fullName>
        <ecNumber>3.6.4.-</ecNumber>
    </recommendedName>
    <alternativeName>
        <fullName evidence="12">Protein CHROMATIN REMODELING 6</fullName>
        <shortName>AtCHR6</shortName>
    </alternativeName>
    <alternativeName>
        <fullName>Protein GYMNOS</fullName>
    </alternativeName>
</protein>
<comment type="function">
    <text evidence="7 8 9 11">Chromatin remodeling factor that represses the expression of embryonic trait genes (such as NFYB9/LEC1) upon and after seed germination and thus enables the developmental switch to post-germinative growth. Silences some MADS-box proteins such as PHE1 and PHE2. Plays a role during carpel differentiation. Regulates late processes in cytokinin signaling.</text>
</comment>
<comment type="subunit">
    <text evidence="11">Interacts with TAF12B.</text>
</comment>
<comment type="subcellular location">
    <subcellularLocation>
        <location evidence="5 9 10">Nucleus</location>
    </subcellularLocation>
</comment>
<comment type="tissue specificity">
    <text evidence="7 8 9">Mostly expressed in tissue undergoing significant differentiation (meristems and primordia) such as young seedlings, influorescent tissue and young siliques, but not in endosperm and seed coat (at protein level). Levels decrease as organs age. Also present in trichomes.</text>
</comment>
<comment type="induction">
    <text evidence="11">Not up-regulated by cytokinins.</text>
</comment>
<comment type="disruption phenotype">
    <text evidence="11">Hypersensitivity to cytokinins.</text>
</comment>
<comment type="miscellaneous">
    <text>'Gymnos' means 'naked' in Greek.</text>
</comment>
<comment type="similarity">
    <text evidence="13">Belongs to the SNF2/RAD54 helicase family.</text>
</comment>